<keyword id="KW-0963">Cytoplasm</keyword>
<keyword id="KW-0271">Exosome</keyword>
<keyword id="KW-0694">RNA-binding</keyword>
<sequence length="260" mass="29172">MDKKIVIPGDLLSDDVKKSGYGTYVKNDKIYSSLCGIESLKEDKVGVIPLAGAYIPSVNDVVIGVVIVVTPSNWILDIAAPYDGLLHVSEYPRRVESREMPEILDVGDSVILRVRDVDSSMKIELALRDPNLHKLRTGQIVEVEPVKVPRVIGHGGSMISMLKKETNCSIFVGQNGRIWIDGKDEDIELLSKALRKIEAEAQRSGLTDRIYNFLKNERMKEKESKPVEFLKNEKTDVSVAKEDHSEDIYRKIDVLLDPKN</sequence>
<comment type="function">
    <text evidence="1">Non-catalytic component of the exosome, which is a complex involved in RNA degradation. Increases the RNA binding and the efficiency of RNA degradation. Confers strong poly(A) specificity to the exosome.</text>
</comment>
<comment type="subunit">
    <text evidence="1">Component of the archaeal exosome complex. Forms a trimer of Rrp4 and/or Csl4 subunits. The trimer associates with a hexameric ring-like arrangement composed of 3 Rrp41-Rrp42 heterodimers.</text>
</comment>
<comment type="subcellular location">
    <subcellularLocation>
        <location evidence="1">Cytoplasm</location>
    </subcellularLocation>
</comment>
<comment type="similarity">
    <text evidence="1">Belongs to the RRP4 family.</text>
</comment>
<proteinExistence type="inferred from homology"/>
<protein>
    <recommendedName>
        <fullName evidence="1">Exosome complex component Rrp4</fullName>
    </recommendedName>
</protein>
<evidence type="ECO:0000255" key="1">
    <source>
        <dbReference type="HAMAP-Rule" id="MF_00623"/>
    </source>
</evidence>
<gene>
    <name evidence="1" type="primary">rrp4</name>
    <name type="ordered locus">MM_2622</name>
</gene>
<organism>
    <name type="scientific">Methanosarcina mazei (strain ATCC BAA-159 / DSM 3647 / Goe1 / Go1 / JCM 11833 / OCM 88)</name>
    <name type="common">Methanosarcina frisia</name>
    <dbReference type="NCBI Taxonomy" id="192952"/>
    <lineage>
        <taxon>Archaea</taxon>
        <taxon>Methanobacteriati</taxon>
        <taxon>Methanobacteriota</taxon>
        <taxon>Stenosarchaea group</taxon>
        <taxon>Methanomicrobia</taxon>
        <taxon>Methanosarcinales</taxon>
        <taxon>Methanosarcinaceae</taxon>
        <taxon>Methanosarcina</taxon>
    </lineage>
</organism>
<feature type="chain" id="PRO_0000050148" description="Exosome complex component Rrp4">
    <location>
        <begin position="1"/>
        <end position="260"/>
    </location>
</feature>
<feature type="domain" description="S1 motif" evidence="1">
    <location>
        <begin position="59"/>
        <end position="128"/>
    </location>
</feature>
<feature type="domain" description="KH" evidence="1">
    <location>
        <begin position="136"/>
        <end position="194"/>
    </location>
</feature>
<dbReference type="EMBL" id="AE008384">
    <property type="protein sequence ID" value="AAM32318.1"/>
    <property type="molecule type" value="Genomic_DNA"/>
</dbReference>
<dbReference type="RefSeq" id="WP_011034535.1">
    <property type="nucleotide sequence ID" value="NC_003901.1"/>
</dbReference>
<dbReference type="SMR" id="Q8PTT9"/>
<dbReference type="GeneID" id="82161707"/>
<dbReference type="KEGG" id="mma:MM_2622"/>
<dbReference type="PATRIC" id="fig|192952.21.peg.3016"/>
<dbReference type="eggNOG" id="arCOG00678">
    <property type="taxonomic scope" value="Archaea"/>
</dbReference>
<dbReference type="HOGENOM" id="CLU_071769_0_0_2"/>
<dbReference type="Proteomes" id="UP000000595">
    <property type="component" value="Chromosome"/>
</dbReference>
<dbReference type="GO" id="GO:0005737">
    <property type="term" value="C:cytoplasm"/>
    <property type="evidence" value="ECO:0007669"/>
    <property type="project" value="UniProtKB-SubCell"/>
</dbReference>
<dbReference type="GO" id="GO:0000178">
    <property type="term" value="C:exosome (RNase complex)"/>
    <property type="evidence" value="ECO:0007669"/>
    <property type="project" value="UniProtKB-KW"/>
</dbReference>
<dbReference type="GO" id="GO:0008143">
    <property type="term" value="F:poly(A) binding"/>
    <property type="evidence" value="ECO:0007669"/>
    <property type="project" value="InterPro"/>
</dbReference>
<dbReference type="GO" id="GO:0071034">
    <property type="term" value="P:CUT catabolic process"/>
    <property type="evidence" value="ECO:0007669"/>
    <property type="project" value="TreeGrafter"/>
</dbReference>
<dbReference type="GO" id="GO:0000467">
    <property type="term" value="P:exonucleolytic trimming to generate mature 3'-end of 5.8S rRNA from tricistronic rRNA transcript (SSU-rRNA, 5.8S rRNA, LSU-rRNA)"/>
    <property type="evidence" value="ECO:0007669"/>
    <property type="project" value="TreeGrafter"/>
</dbReference>
<dbReference type="GO" id="GO:0071051">
    <property type="term" value="P:poly(A)-dependent snoRNA 3'-end processing"/>
    <property type="evidence" value="ECO:0007669"/>
    <property type="project" value="TreeGrafter"/>
</dbReference>
<dbReference type="GO" id="GO:0006401">
    <property type="term" value="P:RNA catabolic process"/>
    <property type="evidence" value="ECO:0007669"/>
    <property type="project" value="UniProtKB-UniRule"/>
</dbReference>
<dbReference type="GO" id="GO:0034475">
    <property type="term" value="P:U4 snRNA 3'-end processing"/>
    <property type="evidence" value="ECO:0007669"/>
    <property type="project" value="TreeGrafter"/>
</dbReference>
<dbReference type="CDD" id="cd22524">
    <property type="entry name" value="KH-I_Rrp4_prokar"/>
    <property type="match status" value="1"/>
</dbReference>
<dbReference type="CDD" id="cd05789">
    <property type="entry name" value="S1_Rrp4"/>
    <property type="match status" value="1"/>
</dbReference>
<dbReference type="FunFam" id="3.30.1370.10:FF:000095">
    <property type="entry name" value="Exosome complex component Rrp4"/>
    <property type="match status" value="1"/>
</dbReference>
<dbReference type="FunFam" id="2.40.50.140:FF:000127">
    <property type="entry name" value="Exosome complex component RRP40"/>
    <property type="match status" value="1"/>
</dbReference>
<dbReference type="Gene3D" id="2.40.50.100">
    <property type="match status" value="1"/>
</dbReference>
<dbReference type="Gene3D" id="3.30.1370.10">
    <property type="entry name" value="K Homology domain, type 1"/>
    <property type="match status" value="1"/>
</dbReference>
<dbReference type="Gene3D" id="2.40.50.140">
    <property type="entry name" value="Nucleic acid-binding proteins"/>
    <property type="match status" value="1"/>
</dbReference>
<dbReference type="HAMAP" id="MF_00623">
    <property type="entry name" value="Exosome_Rrp4"/>
    <property type="match status" value="1"/>
</dbReference>
<dbReference type="InterPro" id="IPR026699">
    <property type="entry name" value="Exosome_RNA_bind1/RRP40/RRP4"/>
</dbReference>
<dbReference type="InterPro" id="IPR004087">
    <property type="entry name" value="KH_dom"/>
</dbReference>
<dbReference type="InterPro" id="IPR004088">
    <property type="entry name" value="KH_dom_type_1"/>
</dbReference>
<dbReference type="InterPro" id="IPR036612">
    <property type="entry name" value="KH_dom_type_1_sf"/>
</dbReference>
<dbReference type="InterPro" id="IPR012340">
    <property type="entry name" value="NA-bd_OB-fold"/>
</dbReference>
<dbReference type="InterPro" id="IPR023474">
    <property type="entry name" value="Rrp4"/>
</dbReference>
<dbReference type="InterPro" id="IPR054371">
    <property type="entry name" value="RRP4_N"/>
</dbReference>
<dbReference type="InterPro" id="IPR048565">
    <property type="entry name" value="RRP4_S1"/>
</dbReference>
<dbReference type="InterPro" id="IPR003029">
    <property type="entry name" value="S1_domain"/>
</dbReference>
<dbReference type="NCBIfam" id="NF003181">
    <property type="entry name" value="PRK04163.1-1"/>
    <property type="match status" value="1"/>
</dbReference>
<dbReference type="PANTHER" id="PTHR21321:SF4">
    <property type="entry name" value="EXOSOME COMPLEX COMPONENT RRP4"/>
    <property type="match status" value="1"/>
</dbReference>
<dbReference type="PANTHER" id="PTHR21321">
    <property type="entry name" value="PNAS-3 RELATED"/>
    <property type="match status" value="1"/>
</dbReference>
<dbReference type="Pfam" id="PF22625">
    <property type="entry name" value="ECR1_N_2"/>
    <property type="match status" value="1"/>
</dbReference>
<dbReference type="Pfam" id="PF15985">
    <property type="entry name" value="KH_6"/>
    <property type="match status" value="1"/>
</dbReference>
<dbReference type="Pfam" id="PF00575">
    <property type="entry name" value="S1"/>
    <property type="match status" value="1"/>
</dbReference>
<dbReference type="SMART" id="SM00322">
    <property type="entry name" value="KH"/>
    <property type="match status" value="1"/>
</dbReference>
<dbReference type="SMART" id="SM00316">
    <property type="entry name" value="S1"/>
    <property type="match status" value="1"/>
</dbReference>
<dbReference type="SUPFAM" id="SSF54791">
    <property type="entry name" value="Eukaryotic type KH-domain (KH-domain type I)"/>
    <property type="match status" value="1"/>
</dbReference>
<dbReference type="SUPFAM" id="SSF50249">
    <property type="entry name" value="Nucleic acid-binding proteins"/>
    <property type="match status" value="1"/>
</dbReference>
<dbReference type="SUPFAM" id="SSF110324">
    <property type="entry name" value="Ribosomal L27 protein-like"/>
    <property type="match status" value="1"/>
</dbReference>
<dbReference type="PROSITE" id="PS50084">
    <property type="entry name" value="KH_TYPE_1"/>
    <property type="match status" value="1"/>
</dbReference>
<dbReference type="PROSITE" id="PS50126">
    <property type="entry name" value="S1"/>
    <property type="match status" value="1"/>
</dbReference>
<accession>Q8PTT9</accession>
<name>RRP4_METMA</name>
<reference key="1">
    <citation type="journal article" date="2002" name="J. Mol. Microbiol. Biotechnol.">
        <title>The genome of Methanosarcina mazei: evidence for lateral gene transfer between Bacteria and Archaea.</title>
        <authorList>
            <person name="Deppenmeier U."/>
            <person name="Johann A."/>
            <person name="Hartsch T."/>
            <person name="Merkl R."/>
            <person name="Schmitz R.A."/>
            <person name="Martinez-Arias R."/>
            <person name="Henne A."/>
            <person name="Wiezer A."/>
            <person name="Baeumer S."/>
            <person name="Jacobi C."/>
            <person name="Brueggemann H."/>
            <person name="Lienard T."/>
            <person name="Christmann A."/>
            <person name="Boemecke M."/>
            <person name="Steckel S."/>
            <person name="Bhattacharyya A."/>
            <person name="Lykidis A."/>
            <person name="Overbeek R."/>
            <person name="Klenk H.-P."/>
            <person name="Gunsalus R.P."/>
            <person name="Fritz H.-J."/>
            <person name="Gottschalk G."/>
        </authorList>
    </citation>
    <scope>NUCLEOTIDE SEQUENCE [LARGE SCALE GENOMIC DNA]</scope>
    <source>
        <strain>ATCC BAA-159 / DSM 3647 / Goe1 / Go1 / JCM 11833 / OCM 88</strain>
    </source>
</reference>